<feature type="chain" id="PRO_0000415161" description="Anthranilate 1,2-dioxygenase ferredoxin subunit">
    <location>
        <begin position="1"/>
        <end position="108"/>
    </location>
</feature>
<feature type="domain" description="Rieske" evidence="3">
    <location>
        <begin position="9"/>
        <end position="105"/>
    </location>
</feature>
<feature type="binding site" evidence="3">
    <location>
        <position position="49"/>
    </location>
    <ligand>
        <name>[2Fe-2S] cluster</name>
        <dbReference type="ChEBI" id="CHEBI:190135"/>
    </ligand>
</feature>
<feature type="binding site" evidence="3">
    <location>
        <position position="51"/>
    </location>
    <ligand>
        <name>[2Fe-2S] cluster</name>
        <dbReference type="ChEBI" id="CHEBI:190135"/>
    </ligand>
</feature>
<feature type="binding site" evidence="3">
    <location>
        <position position="68"/>
    </location>
    <ligand>
        <name>[2Fe-2S] cluster</name>
        <dbReference type="ChEBI" id="CHEBI:190135"/>
    </ligand>
</feature>
<feature type="binding site" evidence="3">
    <location>
        <position position="71"/>
    </location>
    <ligand>
        <name>[2Fe-2S] cluster</name>
        <dbReference type="ChEBI" id="CHEBI:190135"/>
    </ligand>
</feature>
<protein>
    <recommendedName>
        <fullName evidence="5">Anthranilate 1,2-dioxygenase ferredoxin subunit</fullName>
    </recommendedName>
</protein>
<keyword id="KW-0001">2Fe-2S</keyword>
<keyword id="KW-0058">Aromatic hydrocarbons catabolism</keyword>
<keyword id="KW-0249">Electron transport</keyword>
<keyword id="KW-0408">Iron</keyword>
<keyword id="KW-0411">Iron-sulfur</keyword>
<keyword id="KW-0479">Metal-binding</keyword>
<keyword id="KW-0813">Transport</keyword>
<dbReference type="EMBL" id="AY223539">
    <property type="protein sequence ID" value="AAO83641.1"/>
    <property type="molecule type" value="Genomic_DNA"/>
</dbReference>
<dbReference type="SMR" id="Q84BZ1"/>
<dbReference type="STRING" id="292.WI67_21085"/>
<dbReference type="KEGG" id="ag:AAO83641"/>
<dbReference type="eggNOG" id="COG2146">
    <property type="taxonomic scope" value="Bacteria"/>
</dbReference>
<dbReference type="BioCyc" id="MetaCyc:MONOMER-7527"/>
<dbReference type="UniPathway" id="UPA01016">
    <property type="reaction ID" value="UER01026"/>
</dbReference>
<dbReference type="GO" id="GO:0051537">
    <property type="term" value="F:2 iron, 2 sulfur cluster binding"/>
    <property type="evidence" value="ECO:0007669"/>
    <property type="project" value="UniProtKB-KW"/>
</dbReference>
<dbReference type="GO" id="GO:0046872">
    <property type="term" value="F:metal ion binding"/>
    <property type="evidence" value="ECO:0007669"/>
    <property type="project" value="UniProtKB-KW"/>
</dbReference>
<dbReference type="GO" id="GO:0043421">
    <property type="term" value="P:anthranilate catabolic process"/>
    <property type="evidence" value="ECO:0000314"/>
    <property type="project" value="CACAO"/>
</dbReference>
<dbReference type="CDD" id="cd03528">
    <property type="entry name" value="Rieske_RO_ferredoxin"/>
    <property type="match status" value="1"/>
</dbReference>
<dbReference type="FunFam" id="2.102.10.10:FF:000027">
    <property type="entry name" value="Non-heme iron oxygenase ferredoxin subunit"/>
    <property type="match status" value="1"/>
</dbReference>
<dbReference type="Gene3D" id="2.102.10.10">
    <property type="entry name" value="Rieske [2Fe-2S] iron-sulphur domain"/>
    <property type="match status" value="1"/>
</dbReference>
<dbReference type="InterPro" id="IPR017941">
    <property type="entry name" value="Rieske_2Fe-2S"/>
</dbReference>
<dbReference type="InterPro" id="IPR036922">
    <property type="entry name" value="Rieske_2Fe-2S_sf"/>
</dbReference>
<dbReference type="NCBIfam" id="NF041683">
    <property type="entry name" value="ant_diox_AndAb"/>
    <property type="match status" value="1"/>
</dbReference>
<dbReference type="PANTHER" id="PTHR21496">
    <property type="entry name" value="FERREDOXIN-RELATED"/>
    <property type="match status" value="1"/>
</dbReference>
<dbReference type="PANTHER" id="PTHR21496:SF0">
    <property type="entry name" value="RIESKE DOMAIN-CONTAINING PROTEIN"/>
    <property type="match status" value="1"/>
</dbReference>
<dbReference type="Pfam" id="PF00355">
    <property type="entry name" value="Rieske"/>
    <property type="match status" value="1"/>
</dbReference>
<dbReference type="SUPFAM" id="SSF50022">
    <property type="entry name" value="ISP domain"/>
    <property type="match status" value="1"/>
</dbReference>
<dbReference type="PROSITE" id="PS51296">
    <property type="entry name" value="RIESKE"/>
    <property type="match status" value="1"/>
</dbReference>
<proteinExistence type="evidence at protein level"/>
<reference evidence="6 7" key="1">
    <citation type="journal article" date="2003" name="J. Bacteriol.">
        <title>Characterization and regulation of the genes for a novel anthranilate 1,2-dioxygenase from Burkholderia cepacia DBO1.</title>
        <authorList>
            <person name="Chang H.K."/>
            <person name="Mohseni P."/>
            <person name="Zylstra G.J."/>
        </authorList>
    </citation>
    <scope>NUCLEOTIDE SEQUENCE [GENOMIC DNA]</scope>
    <scope>FUNCTION</scope>
    <scope>PATHWAY</scope>
    <scope>INDUCTION</scope>
    <scope>SUBUNIT</scope>
    <source>
        <strain evidence="7">ATCC 29424 / DBO1</strain>
    </source>
</reference>
<name>ANDAB_BURCE</name>
<gene>
    <name evidence="7" type="primary">andAb</name>
</gene>
<comment type="function">
    <text evidence="4 5">Part of the multicomponent anthranilate dioxygenase, that converts anthranilate to catechol. This protein seems to be a 2Fe-2S ferredoxin.</text>
</comment>
<comment type="cofactor">
    <cofactor evidence="1 3">
        <name>[2Fe-2S] cluster</name>
        <dbReference type="ChEBI" id="CHEBI:190135"/>
    </cofactor>
    <text evidence="1 3">Binds 1 [2Fe-2S] cluster per subunit.</text>
</comment>
<comment type="pathway">
    <text evidence="4">Aromatic compound metabolism; anthranilate degradation via hydroxylation; catechol from anthranilate: step 1/1.</text>
</comment>
<comment type="subunit">
    <text evidence="4">Part of a multicomponent enzyme system composed of a reductase (AndAa), a ferredoxin (AndAb) and a two-subunit oxygenase component (AndAc and AndAd).</text>
</comment>
<comment type="induction">
    <text evidence="4">Expression is positively regulated by the transcriptional regulator AndR.</text>
</comment>
<comment type="similarity">
    <text evidence="2">Belongs to the bacterial ring-hydroxylating dioxygenase ferredoxin component family.</text>
</comment>
<organism>
    <name type="scientific">Burkholderia cepacia</name>
    <name type="common">Pseudomonas cepacia</name>
    <dbReference type="NCBI Taxonomy" id="292"/>
    <lineage>
        <taxon>Bacteria</taxon>
        <taxon>Pseudomonadati</taxon>
        <taxon>Pseudomonadota</taxon>
        <taxon>Betaproteobacteria</taxon>
        <taxon>Burkholderiales</taxon>
        <taxon>Burkholderiaceae</taxon>
        <taxon>Burkholderia</taxon>
        <taxon>Burkholderia cepacia complex</taxon>
    </lineage>
</organism>
<sequence>MTEATLAEWHPLGAIDEFTEDEPAARVAGQKPIAVFRIGDELFAMHDLCSHGHARLSEGYVEDGCVECPLHQGLIDIRTGAPKCAPITEPVRVYPIRIVDGQVEVNVG</sequence>
<evidence type="ECO:0000250" key="1">
    <source>
        <dbReference type="UniProtKB" id="P0A185"/>
    </source>
</evidence>
<evidence type="ECO:0000255" key="2"/>
<evidence type="ECO:0000255" key="3">
    <source>
        <dbReference type="PROSITE-ProRule" id="PRU00628"/>
    </source>
</evidence>
<evidence type="ECO:0000269" key="4">
    <source>
    </source>
</evidence>
<evidence type="ECO:0000303" key="5">
    <source>
    </source>
</evidence>
<evidence type="ECO:0000305" key="6"/>
<evidence type="ECO:0000312" key="7">
    <source>
        <dbReference type="EMBL" id="AAO83641.1"/>
    </source>
</evidence>
<accession>Q84BZ1</accession>